<organism>
    <name type="scientific">Escherichia coli</name>
    <dbReference type="NCBI Taxonomy" id="562"/>
    <lineage>
        <taxon>Bacteria</taxon>
        <taxon>Pseudomonadati</taxon>
        <taxon>Pseudomonadota</taxon>
        <taxon>Gammaproteobacteria</taxon>
        <taxon>Enterobacterales</taxon>
        <taxon>Enterobacteriaceae</taxon>
        <taxon>Escherichia</taxon>
    </lineage>
</organism>
<sequence length="419" mass="48173">MRFEEWVKDKHIPFKLNHPDDNYDDFKPLRKIIGDTRVVALGENSHFIKEFFLLRHTLLRFFIEDLGFTTFAFEFGFAEGQIINNWIHGQGTDDEIGRFLKHFYYPEELKTTFLWLREYNKAAKEKITFLGIDIPRNGGSYLPNMEIVHDFFRTADKEALHIIDDAFNIAKKIDYFSTSQAALNLHELTDSEKCRLTSQLARVKVRLEAMAPIHIEKYGIDKYETILHYANGMIYLDYNIQAMSGFISGGGMQGDMGAKDKYMADSVLWHLKNPQSEQKVIVVAHNAHIQKTPILYDGFLSCLPMGQRLKNAIGDDYMSLGITSYSGHTAALYPEVDTKYGFRVDNFQLQEPNEGSVEKAISGCGVTNSFVFFRNIPEDLQSIPNMIRFDSIYMKAELEKAFDGIFQIEKSSVSEVVYE</sequence>
<accession>P05789</accession>
<name>EREB_ECOLX</name>
<comment type="function">
    <text>This enzyme confers resistance to erythromycin through inactivation by hydrolyzing the lactone ring of the antibiotic.</text>
</comment>
<comment type="miscellaneous">
    <text>Erythromycin esterase type I and type II share no significant homology except for the region from 279 to 309.</text>
</comment>
<gene>
    <name type="primary">ereB</name>
</gene>
<feature type="chain" id="PRO_0000087011" description="Erythromycin esterase type II">
    <location>
        <begin position="1"/>
        <end position="419"/>
    </location>
</feature>
<proteinExistence type="predicted"/>
<keyword id="KW-0046">Antibiotic resistance</keyword>
<keyword id="KW-0378">Hydrolase</keyword>
<keyword id="KW-0614">Plasmid</keyword>
<keyword id="KW-0719">Serine esterase</keyword>
<protein>
    <recommendedName>
        <fullName>Erythromycin esterase type II</fullName>
        <ecNumber>3.1.1.-</ecNumber>
    </recommendedName>
</protein>
<geneLocation type="plasmid">
    <name>pIP1527</name>
</geneLocation>
<dbReference type="EC" id="3.1.1.-"/>
<dbReference type="EMBL" id="X03988">
    <property type="protein sequence ID" value="CAA27626.1"/>
    <property type="molecule type" value="Genomic_DNA"/>
</dbReference>
<dbReference type="PIR" id="A24381">
    <property type="entry name" value="ESECRM"/>
</dbReference>
<dbReference type="SMR" id="P05789"/>
<dbReference type="CARD" id="ARO:3000363">
    <property type="molecule name" value="EreB"/>
    <property type="mechanism identifier" value="ARO:0001004"/>
    <property type="mechanism name" value="antibiotic inactivation"/>
</dbReference>
<dbReference type="KEGG" id="ag:CAA27626"/>
<dbReference type="GO" id="GO:0052689">
    <property type="term" value="F:carboxylic ester hydrolase activity"/>
    <property type="evidence" value="ECO:0007669"/>
    <property type="project" value="UniProtKB-KW"/>
</dbReference>
<dbReference type="GO" id="GO:0046677">
    <property type="term" value="P:response to antibiotic"/>
    <property type="evidence" value="ECO:0007669"/>
    <property type="project" value="UniProtKB-KW"/>
</dbReference>
<dbReference type="CDD" id="cd14728">
    <property type="entry name" value="Ere-like"/>
    <property type="match status" value="1"/>
</dbReference>
<dbReference type="Gene3D" id="1.20.1440.30">
    <property type="entry name" value="Biosynthetic Protein domain"/>
    <property type="match status" value="1"/>
</dbReference>
<dbReference type="Gene3D" id="3.40.1660.10">
    <property type="entry name" value="EreA-like (biosynthetic domain)"/>
    <property type="match status" value="1"/>
</dbReference>
<dbReference type="Gene3D" id="3.30.1870.10">
    <property type="entry name" value="EreA-like, domain 2"/>
    <property type="match status" value="1"/>
</dbReference>
<dbReference type="InterPro" id="IPR007815">
    <property type="entry name" value="Emycin_Estase"/>
</dbReference>
<dbReference type="InterPro" id="IPR016273">
    <property type="entry name" value="Emycin_Estase_proteobac"/>
</dbReference>
<dbReference type="InterPro" id="IPR052036">
    <property type="entry name" value="Hydrolase/PRTase-associated"/>
</dbReference>
<dbReference type="NCBIfam" id="NF000209">
    <property type="entry name" value="EreB"/>
    <property type="match status" value="1"/>
</dbReference>
<dbReference type="PANTHER" id="PTHR31299">
    <property type="entry name" value="ESTERASE, PUTATIVE (AFU_ORTHOLOGUE AFUA_1G05850)-RELATED"/>
    <property type="match status" value="1"/>
</dbReference>
<dbReference type="PANTHER" id="PTHR31299:SF0">
    <property type="entry name" value="ESTERASE, PUTATIVE (AFU_ORTHOLOGUE AFUA_1G05850)-RELATED"/>
    <property type="match status" value="1"/>
</dbReference>
<dbReference type="Pfam" id="PF05139">
    <property type="entry name" value="Erythro_esteras"/>
    <property type="match status" value="1"/>
</dbReference>
<dbReference type="PIRSF" id="PIRSF000880">
    <property type="entry name" value="Eryth_est"/>
    <property type="match status" value="1"/>
</dbReference>
<dbReference type="SUPFAM" id="SSF159501">
    <property type="entry name" value="EreA/ChaN-like"/>
    <property type="match status" value="1"/>
</dbReference>
<reference key="1">
    <citation type="journal article" date="1986" name="Nucleic Acids Res.">
        <title>Analysis of the nucleotide sequence of the ereB gene encoding the erythromycin esterase type II.</title>
        <authorList>
            <person name="Arthur M."/>
            <person name="Autissier D."/>
            <person name="Courvalin P."/>
        </authorList>
    </citation>
    <scope>NUCLEOTIDE SEQUENCE [GENOMIC DNA]</scope>
</reference>